<feature type="signal peptide" evidence="1">
    <location>
        <begin position="1"/>
        <end position="25"/>
    </location>
</feature>
<feature type="chain" id="PRO_0000012390" description="Guanylate cyclase 32E">
    <location>
        <begin position="26"/>
        <end position="1163"/>
    </location>
</feature>
<feature type="topological domain" description="Extracellular" evidence="1">
    <location>
        <begin position="29"/>
        <end position="469"/>
    </location>
</feature>
<feature type="transmembrane region" description="Helical" evidence="1">
    <location>
        <begin position="470"/>
        <end position="490"/>
    </location>
</feature>
<feature type="topological domain" description="Cytoplasmic" evidence="1">
    <location>
        <begin position="491"/>
        <end position="1163"/>
    </location>
</feature>
<feature type="domain" description="Protein kinase" evidence="3">
    <location>
        <begin position="507"/>
        <end position="800"/>
    </location>
</feature>
<feature type="domain" description="Guanylate cyclase" evidence="2">
    <location>
        <begin position="873"/>
        <end position="1003"/>
    </location>
</feature>
<feature type="glycosylation site" description="N-linked (GlcNAc...) asparagine" evidence="1">
    <location>
        <position position="147"/>
    </location>
</feature>
<feature type="glycosylation site" description="N-linked (GlcNAc...) asparagine" evidence="1">
    <location>
        <position position="206"/>
    </location>
</feature>
<feature type="glycosylation site" description="N-linked (GlcNAc...) asparagine" evidence="1">
    <location>
        <position position="368"/>
    </location>
</feature>
<feature type="glycosylation site" description="N-linked (GlcNAc...) asparagine" evidence="1">
    <location>
        <position position="390"/>
    </location>
</feature>
<feature type="disulfide bond" description="Interchain" evidence="6">
    <location>
        <position position="454"/>
    </location>
</feature>
<feature type="sequence conflict" description="In Ref. 3; CAA51318/CAA51319." evidence="6" ref="3">
    <original>L</original>
    <variation>D</variation>
    <location>
        <position position="59"/>
    </location>
</feature>
<feature type="sequence conflict" description="In Ref. 3; CAA51318/CAA51319." evidence="6" ref="3">
    <original>A</original>
    <variation>L</variation>
    <location>
        <position position="678"/>
    </location>
</feature>
<feature type="sequence conflict" description="In Ref. 3; CAA51318." evidence="6" ref="3">
    <original>RTNLLYEEKKK</original>
    <variation>ANQFVVRREEE</variation>
    <location>
        <begin position="831"/>
        <end position="841"/>
    </location>
</feature>
<feature type="sequence conflict" description="In Ref. 3; CAA51318/CAA51319." evidence="6" ref="3">
    <original>E</original>
    <variation>M</variation>
    <location>
        <position position="893"/>
    </location>
</feature>
<feature type="sequence conflict" description="In Ref. 3; CAA51318/CAA51319." evidence="6" ref="3">
    <original>S</original>
    <variation>W</variation>
    <location>
        <position position="910"/>
    </location>
</feature>
<feature type="sequence conflict" description="In Ref. 3; CAA51318/CAA51319." evidence="6" ref="3">
    <original>P</original>
    <variation>R</variation>
    <location>
        <position position="962"/>
    </location>
</feature>
<reference evidence="6" key="1">
    <citation type="journal article" date="2000" name="Science">
        <title>The genome sequence of Drosophila melanogaster.</title>
        <authorList>
            <person name="Adams M.D."/>
            <person name="Celniker S.E."/>
            <person name="Holt R.A."/>
            <person name="Evans C.A."/>
            <person name="Gocayne J.D."/>
            <person name="Amanatides P.G."/>
            <person name="Scherer S.E."/>
            <person name="Li P.W."/>
            <person name="Hoskins R.A."/>
            <person name="Galle R.F."/>
            <person name="George R.A."/>
            <person name="Lewis S.E."/>
            <person name="Richards S."/>
            <person name="Ashburner M."/>
            <person name="Henderson S.N."/>
            <person name="Sutton G.G."/>
            <person name="Wortman J.R."/>
            <person name="Yandell M.D."/>
            <person name="Zhang Q."/>
            <person name="Chen L.X."/>
            <person name="Brandon R.C."/>
            <person name="Rogers Y.-H.C."/>
            <person name="Blazej R.G."/>
            <person name="Champe M."/>
            <person name="Pfeiffer B.D."/>
            <person name="Wan K.H."/>
            <person name="Doyle C."/>
            <person name="Baxter E.G."/>
            <person name="Helt G."/>
            <person name="Nelson C.R."/>
            <person name="Miklos G.L.G."/>
            <person name="Abril J.F."/>
            <person name="Agbayani A."/>
            <person name="An H.-J."/>
            <person name="Andrews-Pfannkoch C."/>
            <person name="Baldwin D."/>
            <person name="Ballew R.M."/>
            <person name="Basu A."/>
            <person name="Baxendale J."/>
            <person name="Bayraktaroglu L."/>
            <person name="Beasley E.M."/>
            <person name="Beeson K.Y."/>
            <person name="Benos P.V."/>
            <person name="Berman B.P."/>
            <person name="Bhandari D."/>
            <person name="Bolshakov S."/>
            <person name="Borkova D."/>
            <person name="Botchan M.R."/>
            <person name="Bouck J."/>
            <person name="Brokstein P."/>
            <person name="Brottier P."/>
            <person name="Burtis K.C."/>
            <person name="Busam D.A."/>
            <person name="Butler H."/>
            <person name="Cadieu E."/>
            <person name="Center A."/>
            <person name="Chandra I."/>
            <person name="Cherry J.M."/>
            <person name="Cawley S."/>
            <person name="Dahlke C."/>
            <person name="Davenport L.B."/>
            <person name="Davies P."/>
            <person name="de Pablos B."/>
            <person name="Delcher A."/>
            <person name="Deng Z."/>
            <person name="Mays A.D."/>
            <person name="Dew I."/>
            <person name="Dietz S.M."/>
            <person name="Dodson K."/>
            <person name="Doup L.E."/>
            <person name="Downes M."/>
            <person name="Dugan-Rocha S."/>
            <person name="Dunkov B.C."/>
            <person name="Dunn P."/>
            <person name="Durbin K.J."/>
            <person name="Evangelista C.C."/>
            <person name="Ferraz C."/>
            <person name="Ferriera S."/>
            <person name="Fleischmann W."/>
            <person name="Fosler C."/>
            <person name="Gabrielian A.E."/>
            <person name="Garg N.S."/>
            <person name="Gelbart W.M."/>
            <person name="Glasser K."/>
            <person name="Glodek A."/>
            <person name="Gong F."/>
            <person name="Gorrell J.H."/>
            <person name="Gu Z."/>
            <person name="Guan P."/>
            <person name="Harris M."/>
            <person name="Harris N.L."/>
            <person name="Harvey D.A."/>
            <person name="Heiman T.J."/>
            <person name="Hernandez J.R."/>
            <person name="Houck J."/>
            <person name="Hostin D."/>
            <person name="Houston K.A."/>
            <person name="Howland T.J."/>
            <person name="Wei M.-H."/>
            <person name="Ibegwam C."/>
            <person name="Jalali M."/>
            <person name="Kalush F."/>
            <person name="Karpen G.H."/>
            <person name="Ke Z."/>
            <person name="Kennison J.A."/>
            <person name="Ketchum K.A."/>
            <person name="Kimmel B.E."/>
            <person name="Kodira C.D."/>
            <person name="Kraft C.L."/>
            <person name="Kravitz S."/>
            <person name="Kulp D."/>
            <person name="Lai Z."/>
            <person name="Lasko P."/>
            <person name="Lei Y."/>
            <person name="Levitsky A.A."/>
            <person name="Li J.H."/>
            <person name="Li Z."/>
            <person name="Liang Y."/>
            <person name="Lin X."/>
            <person name="Liu X."/>
            <person name="Mattei B."/>
            <person name="McIntosh T.C."/>
            <person name="McLeod M.P."/>
            <person name="McPherson D."/>
            <person name="Merkulov G."/>
            <person name="Milshina N.V."/>
            <person name="Mobarry C."/>
            <person name="Morris J."/>
            <person name="Moshrefi A."/>
            <person name="Mount S.M."/>
            <person name="Moy M."/>
            <person name="Murphy B."/>
            <person name="Murphy L."/>
            <person name="Muzny D.M."/>
            <person name="Nelson D.L."/>
            <person name="Nelson D.R."/>
            <person name="Nelson K.A."/>
            <person name="Nixon K."/>
            <person name="Nusskern D.R."/>
            <person name="Pacleb J.M."/>
            <person name="Palazzolo M."/>
            <person name="Pittman G.S."/>
            <person name="Pan S."/>
            <person name="Pollard J."/>
            <person name="Puri V."/>
            <person name="Reese M.G."/>
            <person name="Reinert K."/>
            <person name="Remington K."/>
            <person name="Saunders R.D.C."/>
            <person name="Scheeler F."/>
            <person name="Shen H."/>
            <person name="Shue B.C."/>
            <person name="Siden-Kiamos I."/>
            <person name="Simpson M."/>
            <person name="Skupski M.P."/>
            <person name="Smith T.J."/>
            <person name="Spier E."/>
            <person name="Spradling A.C."/>
            <person name="Stapleton M."/>
            <person name="Strong R."/>
            <person name="Sun E."/>
            <person name="Svirskas R."/>
            <person name="Tector C."/>
            <person name="Turner R."/>
            <person name="Venter E."/>
            <person name="Wang A.H."/>
            <person name="Wang X."/>
            <person name="Wang Z.-Y."/>
            <person name="Wassarman D.A."/>
            <person name="Weinstock G.M."/>
            <person name="Weissenbach J."/>
            <person name="Williams S.M."/>
            <person name="Woodage T."/>
            <person name="Worley K.C."/>
            <person name="Wu D."/>
            <person name="Yang S."/>
            <person name="Yao Q.A."/>
            <person name="Ye J."/>
            <person name="Yeh R.-F."/>
            <person name="Zaveri J.S."/>
            <person name="Zhan M."/>
            <person name="Zhang G."/>
            <person name="Zhao Q."/>
            <person name="Zheng L."/>
            <person name="Zheng X.H."/>
            <person name="Zhong F.N."/>
            <person name="Zhong W."/>
            <person name="Zhou X."/>
            <person name="Zhu S.C."/>
            <person name="Zhu X."/>
            <person name="Smith H.O."/>
            <person name="Gibbs R.A."/>
            <person name="Myers E.W."/>
            <person name="Rubin G.M."/>
            <person name="Venter J.C."/>
        </authorList>
    </citation>
    <scope>NUCLEOTIDE SEQUENCE [LARGE SCALE GENOMIC DNA]</scope>
    <source>
        <strain>Berkeley</strain>
    </source>
</reference>
<reference key="2">
    <citation type="journal article" date="2002" name="Genome Biol.">
        <title>Annotation of the Drosophila melanogaster euchromatic genome: a systematic review.</title>
        <authorList>
            <person name="Misra S."/>
            <person name="Crosby M.A."/>
            <person name="Mungall C.J."/>
            <person name="Matthews B.B."/>
            <person name="Campbell K.S."/>
            <person name="Hradecky P."/>
            <person name="Huang Y."/>
            <person name="Kaminker J.S."/>
            <person name="Millburn G.H."/>
            <person name="Prochnik S.E."/>
            <person name="Smith C.D."/>
            <person name="Tupy J.L."/>
            <person name="Whitfield E.J."/>
            <person name="Bayraktaroglu L."/>
            <person name="Berman B.P."/>
            <person name="Bettencourt B.R."/>
            <person name="Celniker S.E."/>
            <person name="de Grey A.D.N.J."/>
            <person name="Drysdale R.A."/>
            <person name="Harris N.L."/>
            <person name="Richter J."/>
            <person name="Russo S."/>
            <person name="Schroeder A.J."/>
            <person name="Shu S.Q."/>
            <person name="Stapleton M."/>
            <person name="Yamada C."/>
            <person name="Ashburner M."/>
            <person name="Gelbart W.M."/>
            <person name="Rubin G.M."/>
            <person name="Lewis S.E."/>
        </authorList>
    </citation>
    <scope>GENOME REANNOTATION</scope>
    <source>
        <strain>Berkeley</strain>
    </source>
</reference>
<reference evidence="6" key="3">
    <citation type="journal article" date="1993" name="Dev. Biol.">
        <title>A membrane guanylate cyclase Drosophila homolog gene exhibits maternal and zygotic expression.</title>
        <authorList>
            <person name="Gigliotti S."/>
            <person name="Cavaliere V."/>
            <person name="Manzi A."/>
            <person name="Tino A."/>
            <person name="Graziani F."/>
            <person name="Malva C."/>
        </authorList>
    </citation>
    <scope>NUCLEOTIDE SEQUENCE [MRNA] OF 59-1163</scope>
    <scope>CHARACTERIZATION</scope>
    <source>
        <strain>Oregon-R</strain>
        <tissue>Embryo</tissue>
        <tissue>Head</tissue>
    </source>
</reference>
<comment type="catalytic activity">
    <reaction evidence="5">
        <text>GTP = 3',5'-cyclic GMP + diphosphate</text>
        <dbReference type="Rhea" id="RHEA:13665"/>
        <dbReference type="ChEBI" id="CHEBI:33019"/>
        <dbReference type="ChEBI" id="CHEBI:37565"/>
        <dbReference type="ChEBI" id="CHEBI:57746"/>
        <dbReference type="EC" id="4.6.1.2"/>
    </reaction>
</comment>
<comment type="subcellular location">
    <subcellularLocation>
        <location>Membrane</location>
        <topology>Single-pass type I membrane protein</topology>
    </subcellularLocation>
</comment>
<comment type="developmental stage">
    <text evidence="4">Expressed both maternally and zygotically.</text>
</comment>
<comment type="similarity">
    <text evidence="2">Belongs to the adenylyl cyclase class-4/guanylyl cyclase family.</text>
</comment>
<comment type="sequence caution" evidence="6">
    <conflict type="frameshift">
        <sequence resource="EMBL-CDS" id="CAA51319"/>
    </conflict>
</comment>
<dbReference type="EC" id="4.6.1.2"/>
<dbReference type="EMBL" id="AE014134">
    <property type="protein sequence ID" value="AAF53079.3"/>
    <property type="molecule type" value="Genomic_DNA"/>
</dbReference>
<dbReference type="EMBL" id="X72800">
    <property type="protein sequence ID" value="CAA51318.1"/>
    <property type="status" value="ALT_FRAME"/>
    <property type="molecule type" value="Genomic_DNA"/>
</dbReference>
<dbReference type="EMBL" id="X72801">
    <property type="protein sequence ID" value="CAA51319.1"/>
    <property type="status" value="ALT_FRAME"/>
    <property type="molecule type" value="mRNA"/>
</dbReference>
<dbReference type="PIR" id="S33525">
    <property type="entry name" value="S33525"/>
</dbReference>
<dbReference type="RefSeq" id="NP_788027.1">
    <property type="nucleotide sequence ID" value="NM_176013.2"/>
</dbReference>
<dbReference type="SMR" id="Q07553"/>
<dbReference type="BioGRID" id="60615">
    <property type="interactions" value="1"/>
</dbReference>
<dbReference type="FunCoup" id="Q07553">
    <property type="interactions" value="96"/>
</dbReference>
<dbReference type="IntAct" id="Q07553">
    <property type="interactions" value="2"/>
</dbReference>
<dbReference type="STRING" id="7227.FBpp0111769"/>
<dbReference type="GlyCosmos" id="Q07553">
    <property type="glycosylation" value="4 sites, No reported glycans"/>
</dbReference>
<dbReference type="GlyGen" id="Q07553">
    <property type="glycosylation" value="4 sites"/>
</dbReference>
<dbReference type="PaxDb" id="7227-FBpp0111769"/>
<dbReference type="EnsemblMetazoa" id="FBtr0343625">
    <property type="protein sequence ID" value="FBpp0310220"/>
    <property type="gene ID" value="FBgn0010197"/>
</dbReference>
<dbReference type="GeneID" id="34553"/>
<dbReference type="KEGG" id="dme:Dmel_CG33114"/>
<dbReference type="AGR" id="FB:FBgn0010197"/>
<dbReference type="CTD" id="34553"/>
<dbReference type="FlyBase" id="FBgn0010197">
    <property type="gene designation" value="Gyc32E"/>
</dbReference>
<dbReference type="VEuPathDB" id="VectorBase:FBgn0010197"/>
<dbReference type="eggNOG" id="KOG1023">
    <property type="taxonomic scope" value="Eukaryota"/>
</dbReference>
<dbReference type="GeneTree" id="ENSGT00940000169004"/>
<dbReference type="InParanoid" id="Q07553"/>
<dbReference type="OrthoDB" id="1890790at2759"/>
<dbReference type="PhylomeDB" id="Q07553"/>
<dbReference type="Reactome" id="R-DME-2514859">
    <property type="pathway name" value="Inactivation, recovery and regulation of the phototransduction cascade"/>
</dbReference>
<dbReference type="SignaLink" id="Q07553"/>
<dbReference type="BioGRID-ORCS" id="34553">
    <property type="hits" value="0 hits in 3 CRISPR screens"/>
</dbReference>
<dbReference type="GenomeRNAi" id="34553"/>
<dbReference type="PRO" id="PR:Q07553"/>
<dbReference type="Proteomes" id="UP000000803">
    <property type="component" value="Chromosome 2L"/>
</dbReference>
<dbReference type="Bgee" id="FBgn0010197">
    <property type="expression patterns" value="Expressed in fat body cell in arthropod fat body and 10 other cell types or tissues"/>
</dbReference>
<dbReference type="ExpressionAtlas" id="Q07553">
    <property type="expression patterns" value="baseline and differential"/>
</dbReference>
<dbReference type="GO" id="GO:0005886">
    <property type="term" value="C:plasma membrane"/>
    <property type="evidence" value="ECO:0000250"/>
    <property type="project" value="FlyBase"/>
</dbReference>
<dbReference type="GO" id="GO:0005524">
    <property type="term" value="F:ATP binding"/>
    <property type="evidence" value="ECO:0007669"/>
    <property type="project" value="InterPro"/>
</dbReference>
<dbReference type="GO" id="GO:0005525">
    <property type="term" value="F:GTP binding"/>
    <property type="evidence" value="ECO:0007669"/>
    <property type="project" value="UniProtKB-KW"/>
</dbReference>
<dbReference type="GO" id="GO:0004383">
    <property type="term" value="F:guanylate cyclase activity"/>
    <property type="evidence" value="ECO:0000250"/>
    <property type="project" value="FlyBase"/>
</dbReference>
<dbReference type="GO" id="GO:0001653">
    <property type="term" value="F:peptide receptor activity"/>
    <property type="evidence" value="ECO:0000318"/>
    <property type="project" value="GO_Central"/>
</dbReference>
<dbReference type="GO" id="GO:0038023">
    <property type="term" value="F:signaling receptor activity"/>
    <property type="evidence" value="ECO:0000250"/>
    <property type="project" value="FlyBase"/>
</dbReference>
<dbReference type="GO" id="GO:0006182">
    <property type="term" value="P:cGMP biosynthetic process"/>
    <property type="evidence" value="ECO:0000318"/>
    <property type="project" value="GO_Central"/>
</dbReference>
<dbReference type="GO" id="GO:0019934">
    <property type="term" value="P:cGMP-mediated signaling"/>
    <property type="evidence" value="ECO:0000250"/>
    <property type="project" value="FlyBase"/>
</dbReference>
<dbReference type="GO" id="GO:0007168">
    <property type="term" value="P:receptor guanylyl cyclase signaling pathway"/>
    <property type="evidence" value="ECO:0000318"/>
    <property type="project" value="GO_Central"/>
</dbReference>
<dbReference type="CDD" id="cd07302">
    <property type="entry name" value="CHD"/>
    <property type="match status" value="1"/>
</dbReference>
<dbReference type="CDD" id="cd06370">
    <property type="entry name" value="PBP1_SAP_GC-like"/>
    <property type="match status" value="1"/>
</dbReference>
<dbReference type="CDD" id="cd14042">
    <property type="entry name" value="PK_GC-A_B"/>
    <property type="match status" value="1"/>
</dbReference>
<dbReference type="FunFam" id="1.10.510.10:FF:000420">
    <property type="entry name" value="Guanylate cyclase"/>
    <property type="match status" value="1"/>
</dbReference>
<dbReference type="FunFam" id="3.30.70.1230:FF:000019">
    <property type="entry name" value="Guanylate cyclase"/>
    <property type="match status" value="1"/>
</dbReference>
<dbReference type="FunFam" id="3.40.50.2300:FF:000279">
    <property type="entry name" value="Guanylate cyclase"/>
    <property type="match status" value="1"/>
</dbReference>
<dbReference type="FunFam" id="3.40.50.2300:FF:000498">
    <property type="entry name" value="Guanylate cyclase"/>
    <property type="match status" value="1"/>
</dbReference>
<dbReference type="Gene3D" id="3.40.50.2300">
    <property type="match status" value="2"/>
</dbReference>
<dbReference type="Gene3D" id="3.30.70.1230">
    <property type="entry name" value="Nucleotide cyclase"/>
    <property type="match status" value="1"/>
</dbReference>
<dbReference type="Gene3D" id="1.10.510.10">
    <property type="entry name" value="Transferase(Phosphotransferase) domain 1"/>
    <property type="match status" value="1"/>
</dbReference>
<dbReference type="InterPro" id="IPR001054">
    <property type="entry name" value="A/G_cyclase"/>
</dbReference>
<dbReference type="InterPro" id="IPR018297">
    <property type="entry name" value="A/G_cyclase_CS"/>
</dbReference>
<dbReference type="InterPro" id="IPR001828">
    <property type="entry name" value="ANF_lig-bd_rcpt"/>
</dbReference>
<dbReference type="InterPro" id="IPR050401">
    <property type="entry name" value="Cyclic_nucleotide_synthase"/>
</dbReference>
<dbReference type="InterPro" id="IPR011009">
    <property type="entry name" value="Kinase-like_dom_sf"/>
</dbReference>
<dbReference type="InterPro" id="IPR029787">
    <property type="entry name" value="Nucleotide_cyclase"/>
</dbReference>
<dbReference type="InterPro" id="IPR028082">
    <property type="entry name" value="Peripla_BP_I"/>
</dbReference>
<dbReference type="InterPro" id="IPR000719">
    <property type="entry name" value="Prot_kinase_dom"/>
</dbReference>
<dbReference type="InterPro" id="IPR001245">
    <property type="entry name" value="Ser-Thr/Tyr_kinase_cat_dom"/>
</dbReference>
<dbReference type="PANTHER" id="PTHR11920:SF501">
    <property type="entry name" value="GUANYLATE CYCLASE 32E"/>
    <property type="match status" value="1"/>
</dbReference>
<dbReference type="PANTHER" id="PTHR11920">
    <property type="entry name" value="GUANYLYL CYCLASE"/>
    <property type="match status" value="1"/>
</dbReference>
<dbReference type="Pfam" id="PF01094">
    <property type="entry name" value="ANF_receptor"/>
    <property type="match status" value="1"/>
</dbReference>
<dbReference type="Pfam" id="PF00211">
    <property type="entry name" value="Guanylate_cyc"/>
    <property type="match status" value="1"/>
</dbReference>
<dbReference type="Pfam" id="PF07714">
    <property type="entry name" value="PK_Tyr_Ser-Thr"/>
    <property type="match status" value="1"/>
</dbReference>
<dbReference type="SMART" id="SM00044">
    <property type="entry name" value="CYCc"/>
    <property type="match status" value="1"/>
</dbReference>
<dbReference type="SUPFAM" id="SSF55073">
    <property type="entry name" value="Nucleotide cyclase"/>
    <property type="match status" value="1"/>
</dbReference>
<dbReference type="SUPFAM" id="SSF53822">
    <property type="entry name" value="Periplasmic binding protein-like I"/>
    <property type="match status" value="1"/>
</dbReference>
<dbReference type="SUPFAM" id="SSF56112">
    <property type="entry name" value="Protein kinase-like (PK-like)"/>
    <property type="match status" value="1"/>
</dbReference>
<dbReference type="PROSITE" id="PS00452">
    <property type="entry name" value="GUANYLATE_CYCLASE_1"/>
    <property type="match status" value="1"/>
</dbReference>
<dbReference type="PROSITE" id="PS50125">
    <property type="entry name" value="GUANYLATE_CYCLASE_2"/>
    <property type="match status" value="1"/>
</dbReference>
<dbReference type="PROSITE" id="PS50011">
    <property type="entry name" value="PROTEIN_KINASE_DOM"/>
    <property type="match status" value="1"/>
</dbReference>
<evidence type="ECO:0000255" key="1"/>
<evidence type="ECO:0000255" key="2">
    <source>
        <dbReference type="PROSITE-ProRule" id="PRU00099"/>
    </source>
</evidence>
<evidence type="ECO:0000255" key="3">
    <source>
        <dbReference type="PROSITE-ProRule" id="PRU00159"/>
    </source>
</evidence>
<evidence type="ECO:0000269" key="4">
    <source>
    </source>
</evidence>
<evidence type="ECO:0000303" key="5">
    <source>
    </source>
</evidence>
<evidence type="ECO:0000305" key="6"/>
<organism>
    <name type="scientific">Drosophila melanogaster</name>
    <name type="common">Fruit fly</name>
    <dbReference type="NCBI Taxonomy" id="7227"/>
    <lineage>
        <taxon>Eukaryota</taxon>
        <taxon>Metazoa</taxon>
        <taxon>Ecdysozoa</taxon>
        <taxon>Arthropoda</taxon>
        <taxon>Hexapoda</taxon>
        <taxon>Insecta</taxon>
        <taxon>Pterygota</taxon>
        <taxon>Neoptera</taxon>
        <taxon>Endopterygota</taxon>
        <taxon>Diptera</taxon>
        <taxon>Brachycera</taxon>
        <taxon>Muscomorpha</taxon>
        <taxon>Ephydroidea</taxon>
        <taxon>Drosophilidae</taxon>
        <taxon>Drosophila</taxon>
        <taxon>Sophophora</taxon>
    </lineage>
</organism>
<gene>
    <name type="primary">Gyc32E</name>
    <name type="synonym">GC</name>
    <name type="ORF">CG33114</name>
</gene>
<accession>Q07553</accession>
<accession>Q9VKI9</accession>
<proteinExistence type="evidence at protein level"/>
<sequence length="1163" mass="130915">MPGPCASAAAFSCILVLLLLGCQRSNPLAAGATVSSMRRLTDTINIGFLAEYSQMRVTLGGLPLAIEDVNKNPNLLPGKKLAFKPVDIGHKMSAYRVKPLRAMTQMREAGVTAFIGPDESCTTEALLASAWNTPMLSFKCSDPIVSNKSTFHTFARTLAPASKVSKSVISLLNAFHWNKFSIVVSSKPIWGSDVARAIQELAEARNFTISHFKYISDYIPTTKTLSQIDKIIEETYATTRIYVFIGEHIAMVDFVRGLQNRRLLESGDYIVVSVDDEIYDSNRRVNIMERNYLDPYIRKEKSKSLDKISFRSVIKISMTYPQNPHIRVPIYGLHLYDSVMIYVRAITEVLRLGGDIYDGNLVMSHIFNRSYHSIQGFDVYIDSNGDAEGNYTVITLQNDVGSGASIGSLAKMSMQPVGFFAYDKNSVIPEFRYIKNDRPIQWLNGRPPLAEPLCGFHGELCPRKKLDWRYLVSGPLCALVVVVAIALLIKHYRYEQTLAGLLWKVDMKDVTVINLGEYNNPTNKNIFQICRQSILVVGEPNKRSFTNIALFRGNIVAMKKIHKKSVDITRSIRKELKLMREVRHENIINFIGASTDHGSVIIFTTYCARGSLEDVLANEDLHLDHMFISSLVSDILKGMIYLHDSEIISHGNLRSSNCLIDSRWVCQISDFGLHELKAGQEEPNKSELELKRALCMAPELLRDAYRPGRGSQKGDVYSFGILLYEMIGRKGPWGDTAYSKEEIIQFVKCPEMLQHGVFRPALTHTHLDIPDYIRKCLCQCWDEDPEVRPDIRLVRMHLKELQAGLKPNIFDNMLSIMEKYAYNLEGLVQERTNLLYEEKKKTDMLLYQMLPRPVAELLKRGDPVEAECFDCVTILFSDIVGFTELCTTSTPFEVVEMLNDWYTCCDSIISNYDVYKVETIGDAYMVVSGLPLQNGSRHAGEIASLALHLLETVGNLKIRHKPTETVQLRIGVHSGPCAAGVVGQKMPRYCLFGDTVNTASRMESTGDSMRIHISEATYQLLQVIGSYVCIERGLTSIKGKGDMRTYWLTKRQQPELTPDLISTVDTLDTYCSGPRESMEVSVHQYCSPASNNYRLGSCNCDTKCLYSRRSDDNVTNSHGTSEFPKVSEPAQVNCNQLCVCRLNSSQMFNNRGPRSAPSITFRL</sequence>
<protein>
    <recommendedName>
        <fullName>Guanylate cyclase 32E</fullName>
        <ecNumber>4.6.1.2</ecNumber>
    </recommendedName>
</protein>
<keyword id="KW-0141">cGMP biosynthesis</keyword>
<keyword id="KW-1015">Disulfide bond</keyword>
<keyword id="KW-0325">Glycoprotein</keyword>
<keyword id="KW-0342">GTP-binding</keyword>
<keyword id="KW-0456">Lyase</keyword>
<keyword id="KW-0472">Membrane</keyword>
<keyword id="KW-0547">Nucleotide-binding</keyword>
<keyword id="KW-0675">Receptor</keyword>
<keyword id="KW-1185">Reference proteome</keyword>
<keyword id="KW-0732">Signal</keyword>
<keyword id="KW-0812">Transmembrane</keyword>
<keyword id="KW-1133">Transmembrane helix</keyword>
<name>GCY3E_DROME</name>